<proteinExistence type="inferred from homology"/>
<sequence>MSLLWQARFFTTVNHLRDLPNTQVPEIAFAGRSNAGKSTAINILSNQKKLCFASKTPGRTQHINYFSIGGAHVGQHRKDETKVEEIRAMLVDLPGYGYAEVSGSAKHHWQALLGDYVQRREQLAALVLIVDSRRPFTDLDIQMLEWFAPTGKPIHCILTKSDKLNRNESTNALRTANTLLASYVDEYGQPFPFTAQLFSALKRTGIDEANDKILELLGLNDEVSEESDSKTAGDAEKAE</sequence>
<reference key="1">
    <citation type="journal article" date="2007" name="PLoS Genet.">
        <title>A tale of two oxidation states: bacterial colonization of arsenic-rich environments.</title>
        <authorList>
            <person name="Muller D."/>
            <person name="Medigue C."/>
            <person name="Koechler S."/>
            <person name="Barbe V."/>
            <person name="Barakat M."/>
            <person name="Talla E."/>
            <person name="Bonnefoy V."/>
            <person name="Krin E."/>
            <person name="Arsene-Ploetze F."/>
            <person name="Carapito C."/>
            <person name="Chandler M."/>
            <person name="Cournoyer B."/>
            <person name="Cruveiller S."/>
            <person name="Dossat C."/>
            <person name="Duval S."/>
            <person name="Heymann M."/>
            <person name="Leize E."/>
            <person name="Lieutaud A."/>
            <person name="Lievremont D."/>
            <person name="Makita Y."/>
            <person name="Mangenot S."/>
            <person name="Nitschke W."/>
            <person name="Ortet P."/>
            <person name="Perdrial N."/>
            <person name="Schoepp B."/>
            <person name="Siguier P."/>
            <person name="Simeonova D.D."/>
            <person name="Rouy Z."/>
            <person name="Segurens B."/>
            <person name="Turlin E."/>
            <person name="Vallenet D."/>
            <person name="van Dorsselaer A."/>
            <person name="Weiss S."/>
            <person name="Weissenbach J."/>
            <person name="Lett M.-C."/>
            <person name="Danchin A."/>
            <person name="Bertin P.N."/>
        </authorList>
    </citation>
    <scope>NUCLEOTIDE SEQUENCE [LARGE SCALE GENOMIC DNA]</scope>
    <source>
        <strain>ULPAs1</strain>
    </source>
</reference>
<protein>
    <recommendedName>
        <fullName evidence="1">Probable GTP-binding protein EngB</fullName>
    </recommendedName>
</protein>
<organism>
    <name type="scientific">Herminiimonas arsenicoxydans</name>
    <dbReference type="NCBI Taxonomy" id="204773"/>
    <lineage>
        <taxon>Bacteria</taxon>
        <taxon>Pseudomonadati</taxon>
        <taxon>Pseudomonadota</taxon>
        <taxon>Betaproteobacteria</taxon>
        <taxon>Burkholderiales</taxon>
        <taxon>Oxalobacteraceae</taxon>
        <taxon>Herminiimonas</taxon>
    </lineage>
</organism>
<feature type="chain" id="PRO_1000005819" description="Probable GTP-binding protein EngB">
    <location>
        <begin position="1"/>
        <end position="239"/>
    </location>
</feature>
<feature type="domain" description="EngB-type G" evidence="1">
    <location>
        <begin position="23"/>
        <end position="219"/>
    </location>
</feature>
<feature type="binding site" evidence="1">
    <location>
        <begin position="31"/>
        <end position="38"/>
    </location>
    <ligand>
        <name>GTP</name>
        <dbReference type="ChEBI" id="CHEBI:37565"/>
    </ligand>
</feature>
<feature type="binding site" evidence="1">
    <location>
        <position position="38"/>
    </location>
    <ligand>
        <name>Mg(2+)</name>
        <dbReference type="ChEBI" id="CHEBI:18420"/>
    </ligand>
</feature>
<feature type="binding site" evidence="1">
    <location>
        <begin position="58"/>
        <end position="62"/>
    </location>
    <ligand>
        <name>GTP</name>
        <dbReference type="ChEBI" id="CHEBI:37565"/>
    </ligand>
</feature>
<feature type="binding site" evidence="1">
    <location>
        <position position="60"/>
    </location>
    <ligand>
        <name>Mg(2+)</name>
        <dbReference type="ChEBI" id="CHEBI:18420"/>
    </ligand>
</feature>
<feature type="binding site" evidence="1">
    <location>
        <begin position="92"/>
        <end position="95"/>
    </location>
    <ligand>
        <name>GTP</name>
        <dbReference type="ChEBI" id="CHEBI:37565"/>
    </ligand>
</feature>
<feature type="binding site" evidence="1">
    <location>
        <begin position="159"/>
        <end position="162"/>
    </location>
    <ligand>
        <name>GTP</name>
        <dbReference type="ChEBI" id="CHEBI:37565"/>
    </ligand>
</feature>
<feature type="binding site" evidence="1">
    <location>
        <begin position="193"/>
        <end position="200"/>
    </location>
    <ligand>
        <name>GTP</name>
        <dbReference type="ChEBI" id="CHEBI:37565"/>
    </ligand>
</feature>
<evidence type="ECO:0000255" key="1">
    <source>
        <dbReference type="HAMAP-Rule" id="MF_00321"/>
    </source>
</evidence>
<comment type="function">
    <text evidence="1">Necessary for normal cell division and for the maintenance of normal septation.</text>
</comment>
<comment type="cofactor">
    <cofactor evidence="1">
        <name>Mg(2+)</name>
        <dbReference type="ChEBI" id="CHEBI:18420"/>
    </cofactor>
</comment>
<comment type="similarity">
    <text evidence="1">Belongs to the TRAFAC class TrmE-Era-EngA-EngB-Septin-like GTPase superfamily. EngB GTPase family.</text>
</comment>
<name>ENGB_HERAR</name>
<accession>A4G9Q7</accession>
<keyword id="KW-0131">Cell cycle</keyword>
<keyword id="KW-0132">Cell division</keyword>
<keyword id="KW-0342">GTP-binding</keyword>
<keyword id="KW-0460">Magnesium</keyword>
<keyword id="KW-0479">Metal-binding</keyword>
<keyword id="KW-0547">Nucleotide-binding</keyword>
<keyword id="KW-1185">Reference proteome</keyword>
<keyword id="KW-0717">Septation</keyword>
<dbReference type="EMBL" id="CU207211">
    <property type="protein sequence ID" value="CAL63244.1"/>
    <property type="molecule type" value="Genomic_DNA"/>
</dbReference>
<dbReference type="SMR" id="A4G9Q7"/>
<dbReference type="STRING" id="204773.HEAR3135"/>
<dbReference type="KEGG" id="har:HEAR3135"/>
<dbReference type="eggNOG" id="COG0218">
    <property type="taxonomic scope" value="Bacteria"/>
</dbReference>
<dbReference type="HOGENOM" id="CLU_033732_1_1_4"/>
<dbReference type="OrthoDB" id="9804921at2"/>
<dbReference type="Proteomes" id="UP000006697">
    <property type="component" value="Chromosome"/>
</dbReference>
<dbReference type="GO" id="GO:0005829">
    <property type="term" value="C:cytosol"/>
    <property type="evidence" value="ECO:0007669"/>
    <property type="project" value="TreeGrafter"/>
</dbReference>
<dbReference type="GO" id="GO:0005525">
    <property type="term" value="F:GTP binding"/>
    <property type="evidence" value="ECO:0007669"/>
    <property type="project" value="UniProtKB-UniRule"/>
</dbReference>
<dbReference type="GO" id="GO:0046872">
    <property type="term" value="F:metal ion binding"/>
    <property type="evidence" value="ECO:0007669"/>
    <property type="project" value="UniProtKB-KW"/>
</dbReference>
<dbReference type="GO" id="GO:0000917">
    <property type="term" value="P:division septum assembly"/>
    <property type="evidence" value="ECO:0007669"/>
    <property type="project" value="UniProtKB-KW"/>
</dbReference>
<dbReference type="CDD" id="cd01876">
    <property type="entry name" value="YihA_EngB"/>
    <property type="match status" value="1"/>
</dbReference>
<dbReference type="FunFam" id="3.40.50.300:FF:000098">
    <property type="entry name" value="Probable GTP-binding protein EngB"/>
    <property type="match status" value="1"/>
</dbReference>
<dbReference type="Gene3D" id="3.40.50.300">
    <property type="entry name" value="P-loop containing nucleotide triphosphate hydrolases"/>
    <property type="match status" value="1"/>
</dbReference>
<dbReference type="HAMAP" id="MF_00321">
    <property type="entry name" value="GTPase_EngB"/>
    <property type="match status" value="1"/>
</dbReference>
<dbReference type="InterPro" id="IPR030393">
    <property type="entry name" value="G_ENGB_dom"/>
</dbReference>
<dbReference type="InterPro" id="IPR006073">
    <property type="entry name" value="GTP-bd"/>
</dbReference>
<dbReference type="InterPro" id="IPR019987">
    <property type="entry name" value="GTP-bd_ribosome_bio_YsxC"/>
</dbReference>
<dbReference type="InterPro" id="IPR027417">
    <property type="entry name" value="P-loop_NTPase"/>
</dbReference>
<dbReference type="NCBIfam" id="TIGR03598">
    <property type="entry name" value="GTPase_YsxC"/>
    <property type="match status" value="1"/>
</dbReference>
<dbReference type="PANTHER" id="PTHR11649:SF13">
    <property type="entry name" value="ENGB-TYPE G DOMAIN-CONTAINING PROTEIN"/>
    <property type="match status" value="1"/>
</dbReference>
<dbReference type="PANTHER" id="PTHR11649">
    <property type="entry name" value="MSS1/TRME-RELATED GTP-BINDING PROTEIN"/>
    <property type="match status" value="1"/>
</dbReference>
<dbReference type="Pfam" id="PF01926">
    <property type="entry name" value="MMR_HSR1"/>
    <property type="match status" value="1"/>
</dbReference>
<dbReference type="SUPFAM" id="SSF52540">
    <property type="entry name" value="P-loop containing nucleoside triphosphate hydrolases"/>
    <property type="match status" value="1"/>
</dbReference>
<dbReference type="PROSITE" id="PS51706">
    <property type="entry name" value="G_ENGB"/>
    <property type="match status" value="1"/>
</dbReference>
<gene>
    <name evidence="1" type="primary">engB</name>
    <name type="ordered locus">HEAR3135</name>
</gene>